<organism>
    <name type="scientific">Schizosaccharomyces pombe (strain 972 / ATCC 24843)</name>
    <name type="common">Fission yeast</name>
    <dbReference type="NCBI Taxonomy" id="284812"/>
    <lineage>
        <taxon>Eukaryota</taxon>
        <taxon>Fungi</taxon>
        <taxon>Dikarya</taxon>
        <taxon>Ascomycota</taxon>
        <taxon>Taphrinomycotina</taxon>
        <taxon>Schizosaccharomycetes</taxon>
        <taxon>Schizosaccharomycetales</taxon>
        <taxon>Schizosaccharomycetaceae</taxon>
        <taxon>Schizosaccharomyces</taxon>
    </lineage>
</organism>
<gene>
    <name type="primary">rhp51</name>
    <name type="synonym">rad51</name>
    <name type="ORF">SPAC644.14c</name>
</gene>
<name>RAD51_SCHPO</name>
<sequence>MADTEVEMQVSAADTNNNENGQAQSNYEYDVNVQDEEDEAAAGPMPLQMLEGNGITASDIKKIHEAGYYTVESIAYTPKRQLLLIKGISEAKADKLLGEASKLVPMGFTTATEYHIRRSELITITTGSKQLDTLLQGGVETGSITELFGEFRTGKSQICHTLAVTCQLPIDMGGGEGKCLYIDTEGTFRPVRLLAVADRYGLNGEEVLDNVAYARAYNADHQLELLQQAANMMSESRFSLLVVDSCTALYRTDFSGRGELSARQMHLARFMRTLQRLADEFGIAVVITNQVVAQVDGISFNPDPKKPIGGNILAHSSTTRLSLRKGRGEQRICKIYDSPCLPESEAIFAINSDGVGDPKEIIAPV</sequence>
<dbReference type="EMBL" id="D13805">
    <property type="protein sequence ID" value="BAA02963.1"/>
    <property type="molecule type" value="Genomic_DNA"/>
</dbReference>
<dbReference type="EMBL" id="Z22691">
    <property type="protein sequence ID" value="CAA80399.1"/>
    <property type="molecule type" value="Genomic_DNA"/>
</dbReference>
<dbReference type="EMBL" id="Z24756">
    <property type="protein sequence ID" value="CAA80879.1"/>
    <property type="molecule type" value="Genomic_DNA"/>
</dbReference>
<dbReference type="EMBL" id="Z24756">
    <property type="protein sequence ID" value="CAA80878.1"/>
    <property type="status" value="ALT_INIT"/>
    <property type="molecule type" value="Genomic_DNA"/>
</dbReference>
<dbReference type="EMBL" id="CU329670">
    <property type="protein sequence ID" value="CAB90141.1"/>
    <property type="molecule type" value="Genomic_DNA"/>
</dbReference>
<dbReference type="PIR" id="S42107">
    <property type="entry name" value="S42107"/>
</dbReference>
<dbReference type="RefSeq" id="NP_593882.1">
    <property type="nucleotide sequence ID" value="NM_001019312.2"/>
</dbReference>
<dbReference type="SMR" id="P36601"/>
<dbReference type="DIP" id="DIP-29235N"/>
<dbReference type="FunCoup" id="P36601">
    <property type="interactions" value="521"/>
</dbReference>
<dbReference type="IntAct" id="P36601">
    <property type="interactions" value="21"/>
</dbReference>
<dbReference type="MINT" id="P36601"/>
<dbReference type="STRING" id="284812.P36601"/>
<dbReference type="iPTMnet" id="P36601"/>
<dbReference type="PaxDb" id="4896-SPAC644.14c.1"/>
<dbReference type="GeneID" id="2543580"/>
<dbReference type="KEGG" id="spo:2543580"/>
<dbReference type="PomBase" id="SPAC644.14c"/>
<dbReference type="eggNOG" id="KOG1433">
    <property type="taxonomic scope" value="Eukaryota"/>
</dbReference>
<dbReference type="HOGENOM" id="CLU_041732_0_0_1"/>
<dbReference type="InParanoid" id="P36601"/>
<dbReference type="PhylomeDB" id="P36601"/>
<dbReference type="Reactome" id="R-SPO-5693616">
    <property type="pathway name" value="Presynaptic phase of homologous DNA pairing and strand exchange"/>
</dbReference>
<dbReference type="PRO" id="PR:P36601"/>
<dbReference type="Proteomes" id="UP000002485">
    <property type="component" value="Chromosome I"/>
</dbReference>
<dbReference type="GO" id="GO:0000785">
    <property type="term" value="C:chromatin"/>
    <property type="evidence" value="ECO:0000303"/>
    <property type="project" value="PomBase"/>
</dbReference>
<dbReference type="GO" id="GO:0000775">
    <property type="term" value="C:chromosome, centromeric region"/>
    <property type="evidence" value="ECO:0000314"/>
    <property type="project" value="PomBase"/>
</dbReference>
<dbReference type="GO" id="GO:0000794">
    <property type="term" value="C:condensed nuclear chromosome"/>
    <property type="evidence" value="ECO:0000318"/>
    <property type="project" value="GO_Central"/>
</dbReference>
<dbReference type="GO" id="GO:0005635">
    <property type="term" value="C:nuclear envelope"/>
    <property type="evidence" value="ECO:0007005"/>
    <property type="project" value="PomBase"/>
</dbReference>
<dbReference type="GO" id="GO:0005634">
    <property type="term" value="C:nucleus"/>
    <property type="evidence" value="ECO:0007005"/>
    <property type="project" value="PomBase"/>
</dbReference>
<dbReference type="GO" id="GO:0035861">
    <property type="term" value="C:site of double-strand break"/>
    <property type="evidence" value="ECO:0000314"/>
    <property type="project" value="PomBase"/>
</dbReference>
<dbReference type="GO" id="GO:0005524">
    <property type="term" value="F:ATP binding"/>
    <property type="evidence" value="ECO:0000314"/>
    <property type="project" value="UniProtKB"/>
</dbReference>
<dbReference type="GO" id="GO:0016887">
    <property type="term" value="F:ATP hydrolysis activity"/>
    <property type="evidence" value="ECO:0000303"/>
    <property type="project" value="PomBase"/>
</dbReference>
<dbReference type="GO" id="GO:0008094">
    <property type="term" value="F:ATP-dependent activity, acting on DNA"/>
    <property type="evidence" value="ECO:0000314"/>
    <property type="project" value="UniProtKB"/>
</dbReference>
<dbReference type="GO" id="GO:0140664">
    <property type="term" value="F:ATP-dependent DNA damage sensor activity"/>
    <property type="evidence" value="ECO:0007669"/>
    <property type="project" value="InterPro"/>
</dbReference>
<dbReference type="GO" id="GO:0000150">
    <property type="term" value="F:DNA strand exchange activity"/>
    <property type="evidence" value="ECO:0000314"/>
    <property type="project" value="UniProtKB"/>
</dbReference>
<dbReference type="GO" id="GO:0003690">
    <property type="term" value="F:double-stranded DNA binding"/>
    <property type="evidence" value="ECO:0000314"/>
    <property type="project" value="UniProtKB"/>
</dbReference>
<dbReference type="GO" id="GO:0042802">
    <property type="term" value="F:identical protein binding"/>
    <property type="evidence" value="ECO:0000353"/>
    <property type="project" value="IntAct"/>
</dbReference>
<dbReference type="GO" id="GO:0003697">
    <property type="term" value="F:single-stranded DNA binding"/>
    <property type="evidence" value="ECO:0000314"/>
    <property type="project" value="UniProtKB"/>
</dbReference>
<dbReference type="GO" id="GO:1905334">
    <property type="term" value="F:Swi5-Sfr1 complex binding"/>
    <property type="evidence" value="ECO:0000314"/>
    <property type="project" value="PomBase"/>
</dbReference>
<dbReference type="GO" id="GO:0070192">
    <property type="term" value="P:chromosome organization involved in meiotic cell cycle"/>
    <property type="evidence" value="ECO:0000318"/>
    <property type="project" value="GO_Central"/>
</dbReference>
<dbReference type="GO" id="GO:0000730">
    <property type="term" value="P:DNA recombinase assembly"/>
    <property type="evidence" value="ECO:0000314"/>
    <property type="project" value="UniProtKB"/>
</dbReference>
<dbReference type="GO" id="GO:0006310">
    <property type="term" value="P:DNA recombination"/>
    <property type="evidence" value="ECO:0000314"/>
    <property type="project" value="PomBase"/>
</dbReference>
<dbReference type="GO" id="GO:0042148">
    <property type="term" value="P:DNA strand invasion"/>
    <property type="evidence" value="ECO:0000314"/>
    <property type="project" value="PomBase"/>
</dbReference>
<dbReference type="GO" id="GO:1990918">
    <property type="term" value="P:double-strand break repair involved in meiotic recombination"/>
    <property type="evidence" value="ECO:0000315"/>
    <property type="project" value="PomBase"/>
</dbReference>
<dbReference type="GO" id="GO:0000724">
    <property type="term" value="P:double-strand break repair via homologous recombination"/>
    <property type="evidence" value="ECO:0000315"/>
    <property type="project" value="PomBase"/>
</dbReference>
<dbReference type="GO" id="GO:0007533">
    <property type="term" value="P:mating type switching"/>
    <property type="evidence" value="ECO:0000316"/>
    <property type="project" value="PomBase"/>
</dbReference>
<dbReference type="GO" id="GO:0000708">
    <property type="term" value="P:meiotic strand invasion"/>
    <property type="evidence" value="ECO:0000314"/>
    <property type="project" value="PomBase"/>
</dbReference>
<dbReference type="GO" id="GO:0006312">
    <property type="term" value="P:mitotic recombination"/>
    <property type="evidence" value="ECO:0000316"/>
    <property type="project" value="PomBase"/>
</dbReference>
<dbReference type="GO" id="GO:1990426">
    <property type="term" value="P:mitotic recombination-dependent replication fork processing"/>
    <property type="evidence" value="ECO:0000315"/>
    <property type="project" value="PomBase"/>
</dbReference>
<dbReference type="GO" id="GO:0051260">
    <property type="term" value="P:protein homooligomerization"/>
    <property type="evidence" value="ECO:0000353"/>
    <property type="project" value="UniProtKB"/>
</dbReference>
<dbReference type="GO" id="GO:0007131">
    <property type="term" value="P:reciprocal meiotic recombination"/>
    <property type="evidence" value="ECO:0000318"/>
    <property type="project" value="GO_Central"/>
</dbReference>
<dbReference type="GO" id="GO:0036298">
    <property type="term" value="P:recombinational interstrand cross-link repair"/>
    <property type="evidence" value="ECO:0000315"/>
    <property type="project" value="PomBase"/>
</dbReference>
<dbReference type="GO" id="GO:0031297">
    <property type="term" value="P:replication fork processing"/>
    <property type="evidence" value="ECO:0000269"/>
    <property type="project" value="PomBase"/>
</dbReference>
<dbReference type="GO" id="GO:0120290">
    <property type="term" value="P:stalled replication fork localization to nuclear periphery"/>
    <property type="evidence" value="ECO:0000315"/>
    <property type="project" value="PomBase"/>
</dbReference>
<dbReference type="GO" id="GO:0000723">
    <property type="term" value="P:telomere maintenance"/>
    <property type="evidence" value="ECO:0000316"/>
    <property type="project" value="PomBase"/>
</dbReference>
<dbReference type="CDD" id="cd19513">
    <property type="entry name" value="Rad51"/>
    <property type="match status" value="1"/>
</dbReference>
<dbReference type="FunFam" id="1.10.150.20:FF:000008">
    <property type="entry name" value="DNA repair protein RAD51 homolog"/>
    <property type="match status" value="1"/>
</dbReference>
<dbReference type="FunFam" id="3.40.50.300:FF:000092">
    <property type="entry name" value="DNA repair protein Rad51 homolog"/>
    <property type="match status" value="1"/>
</dbReference>
<dbReference type="Gene3D" id="1.10.150.20">
    <property type="entry name" value="5' to 3' exonuclease, C-terminal subdomain"/>
    <property type="match status" value="1"/>
</dbReference>
<dbReference type="Gene3D" id="3.40.50.300">
    <property type="entry name" value="P-loop containing nucleotide triphosphate hydrolases"/>
    <property type="match status" value="1"/>
</dbReference>
<dbReference type="InterPro" id="IPR003593">
    <property type="entry name" value="AAA+_ATPase"/>
</dbReference>
<dbReference type="InterPro" id="IPR011941">
    <property type="entry name" value="DNA_recomb/repair_Rad51"/>
</dbReference>
<dbReference type="InterPro" id="IPR013632">
    <property type="entry name" value="DNA_recomb/repair_Rad51_C"/>
</dbReference>
<dbReference type="InterPro" id="IPR016467">
    <property type="entry name" value="DNA_recomb/repair_RecA-like"/>
</dbReference>
<dbReference type="InterPro" id="IPR010995">
    <property type="entry name" value="DNA_repair_Rad51/TF_NusA_a-hlx"/>
</dbReference>
<dbReference type="InterPro" id="IPR027417">
    <property type="entry name" value="P-loop_NTPase"/>
</dbReference>
<dbReference type="InterPro" id="IPR020588">
    <property type="entry name" value="RecA_ATP-bd"/>
</dbReference>
<dbReference type="InterPro" id="IPR020587">
    <property type="entry name" value="RecA_monomer-monomer_interface"/>
</dbReference>
<dbReference type="NCBIfam" id="NF003301">
    <property type="entry name" value="PRK04301.1"/>
    <property type="match status" value="1"/>
</dbReference>
<dbReference type="NCBIfam" id="TIGR02239">
    <property type="entry name" value="recomb_RAD51"/>
    <property type="match status" value="1"/>
</dbReference>
<dbReference type="PANTHER" id="PTHR22942:SF39">
    <property type="entry name" value="DNA REPAIR PROTEIN RAD51 HOMOLOG 1"/>
    <property type="match status" value="1"/>
</dbReference>
<dbReference type="PANTHER" id="PTHR22942">
    <property type="entry name" value="RECA/RAD51/RADA DNA STRAND-PAIRING FAMILY MEMBER"/>
    <property type="match status" value="1"/>
</dbReference>
<dbReference type="Pfam" id="PF14520">
    <property type="entry name" value="HHH_5"/>
    <property type="match status" value="1"/>
</dbReference>
<dbReference type="Pfam" id="PF08423">
    <property type="entry name" value="Rad51"/>
    <property type="match status" value="1"/>
</dbReference>
<dbReference type="PIRSF" id="PIRSF005856">
    <property type="entry name" value="Rad51"/>
    <property type="match status" value="1"/>
</dbReference>
<dbReference type="SMART" id="SM00382">
    <property type="entry name" value="AAA"/>
    <property type="match status" value="1"/>
</dbReference>
<dbReference type="SUPFAM" id="SSF52540">
    <property type="entry name" value="P-loop containing nucleoside triphosphate hydrolases"/>
    <property type="match status" value="1"/>
</dbReference>
<dbReference type="SUPFAM" id="SSF47794">
    <property type="entry name" value="Rad51 N-terminal domain-like"/>
    <property type="match status" value="1"/>
</dbReference>
<dbReference type="PROSITE" id="PS50162">
    <property type="entry name" value="RECA_2"/>
    <property type="match status" value="1"/>
</dbReference>
<dbReference type="PROSITE" id="PS50163">
    <property type="entry name" value="RECA_3"/>
    <property type="match status" value="1"/>
</dbReference>
<feature type="chain" id="PRO_0000122924" description="DNA repair protein rhp51">
    <location>
        <begin position="1"/>
        <end position="365"/>
    </location>
</feature>
<feature type="region of interest" description="Disordered" evidence="2">
    <location>
        <begin position="1"/>
        <end position="25"/>
    </location>
</feature>
<feature type="compositionally biased region" description="Polar residues" evidence="2">
    <location>
        <begin position="12"/>
        <end position="25"/>
    </location>
</feature>
<feature type="binding site" evidence="1">
    <location>
        <begin position="149"/>
        <end position="156"/>
    </location>
    <ligand>
        <name>ATP</name>
        <dbReference type="ChEBI" id="CHEBI:30616"/>
    </ligand>
</feature>
<feature type="sequence conflict" description="In Ref. 1 and 4." evidence="6" ref="1 4">
    <original>T</original>
    <variation>M</variation>
    <location>
        <position position="15"/>
    </location>
</feature>
<reference key="1">
    <citation type="journal article" date="1993" name="Nat. Genet.">
        <title>Cloning of human, mouse and fission yeast recombination genes homologous to RAD51 and recA.</title>
        <authorList>
            <person name="Shinohara A."/>
            <person name="Ogawa H."/>
            <person name="Matsuda Y."/>
            <person name="Ushio N."/>
            <person name="Ikeo K."/>
            <person name="Ogawa T."/>
        </authorList>
    </citation>
    <scope>NUCLEOTIDE SEQUENCE [GENOMIC DNA]</scope>
</reference>
<reference key="2">
    <citation type="journal article" date="1993" name="Nucleic Acids Res.">
        <title>Cloning the RAD51 homologue of Schizosaccharomyces pombe.</title>
        <authorList>
            <person name="Muris D.F.R."/>
            <person name="Vreeken K."/>
            <person name="Carr A.M."/>
            <person name="Broughton B.C."/>
            <person name="Lehmann A.R."/>
            <person name="Lohman P.H.M."/>
            <person name="Pastink A."/>
        </authorList>
    </citation>
    <scope>NUCLEOTIDE SEQUENCE [GENOMIC DNA]</scope>
</reference>
<reference key="3">
    <citation type="journal article" date="1994" name="Gene">
        <title>Cloning and sequence analysis of rhp51+, a Schizosaccharomyces pombe homolog of the Saccharomyces cerevisiae RAD51 gene.</title>
        <authorList>
            <person name="Jang Y.K."/>
            <person name="Jin Y.H."/>
            <person name="Kim E.M."/>
            <person name="Hong S.H."/>
            <person name="Fabre F."/>
            <person name="Park S.D."/>
        </authorList>
    </citation>
    <scope>NUCLEOTIDE SEQUENCE [GENOMIC DNA]</scope>
</reference>
<reference key="4">
    <citation type="journal article" date="2002" name="Nature">
        <title>The genome sequence of Schizosaccharomyces pombe.</title>
        <authorList>
            <person name="Wood V."/>
            <person name="Gwilliam R."/>
            <person name="Rajandream M.A."/>
            <person name="Lyne M.H."/>
            <person name="Lyne R."/>
            <person name="Stewart A."/>
            <person name="Sgouros J.G."/>
            <person name="Peat N."/>
            <person name="Hayles J."/>
            <person name="Baker S.G."/>
            <person name="Basham D."/>
            <person name="Bowman S."/>
            <person name="Brooks K."/>
            <person name="Brown D."/>
            <person name="Brown S."/>
            <person name="Chillingworth T."/>
            <person name="Churcher C.M."/>
            <person name="Collins M."/>
            <person name="Connor R."/>
            <person name="Cronin A."/>
            <person name="Davis P."/>
            <person name="Feltwell T."/>
            <person name="Fraser A."/>
            <person name="Gentles S."/>
            <person name="Goble A."/>
            <person name="Hamlin N."/>
            <person name="Harris D.E."/>
            <person name="Hidalgo J."/>
            <person name="Hodgson G."/>
            <person name="Holroyd S."/>
            <person name="Hornsby T."/>
            <person name="Howarth S."/>
            <person name="Huckle E.J."/>
            <person name="Hunt S."/>
            <person name="Jagels K."/>
            <person name="James K.D."/>
            <person name="Jones L."/>
            <person name="Jones M."/>
            <person name="Leather S."/>
            <person name="McDonald S."/>
            <person name="McLean J."/>
            <person name="Mooney P."/>
            <person name="Moule S."/>
            <person name="Mungall K.L."/>
            <person name="Murphy L.D."/>
            <person name="Niblett D."/>
            <person name="Odell C."/>
            <person name="Oliver K."/>
            <person name="O'Neil S."/>
            <person name="Pearson D."/>
            <person name="Quail M.A."/>
            <person name="Rabbinowitsch E."/>
            <person name="Rutherford K.M."/>
            <person name="Rutter S."/>
            <person name="Saunders D."/>
            <person name="Seeger K."/>
            <person name="Sharp S."/>
            <person name="Skelton J."/>
            <person name="Simmonds M.N."/>
            <person name="Squares R."/>
            <person name="Squares S."/>
            <person name="Stevens K."/>
            <person name="Taylor K."/>
            <person name="Taylor R.G."/>
            <person name="Tivey A."/>
            <person name="Walsh S.V."/>
            <person name="Warren T."/>
            <person name="Whitehead S."/>
            <person name="Woodward J.R."/>
            <person name="Volckaert G."/>
            <person name="Aert R."/>
            <person name="Robben J."/>
            <person name="Grymonprez B."/>
            <person name="Weltjens I."/>
            <person name="Vanstreels E."/>
            <person name="Rieger M."/>
            <person name="Schaefer M."/>
            <person name="Mueller-Auer S."/>
            <person name="Gabel C."/>
            <person name="Fuchs M."/>
            <person name="Duesterhoeft A."/>
            <person name="Fritzc C."/>
            <person name="Holzer E."/>
            <person name="Moestl D."/>
            <person name="Hilbert H."/>
            <person name="Borzym K."/>
            <person name="Langer I."/>
            <person name="Beck A."/>
            <person name="Lehrach H."/>
            <person name="Reinhardt R."/>
            <person name="Pohl T.M."/>
            <person name="Eger P."/>
            <person name="Zimmermann W."/>
            <person name="Wedler H."/>
            <person name="Wambutt R."/>
            <person name="Purnelle B."/>
            <person name="Goffeau A."/>
            <person name="Cadieu E."/>
            <person name="Dreano S."/>
            <person name="Gloux S."/>
            <person name="Lelaure V."/>
            <person name="Mottier S."/>
            <person name="Galibert F."/>
            <person name="Aves S.J."/>
            <person name="Xiang Z."/>
            <person name="Hunt C."/>
            <person name="Moore K."/>
            <person name="Hurst S.M."/>
            <person name="Lucas M."/>
            <person name="Rochet M."/>
            <person name="Gaillardin C."/>
            <person name="Tallada V.A."/>
            <person name="Garzon A."/>
            <person name="Thode G."/>
            <person name="Daga R.R."/>
            <person name="Cruzado L."/>
            <person name="Jimenez J."/>
            <person name="Sanchez M."/>
            <person name="del Rey F."/>
            <person name="Benito J."/>
            <person name="Dominguez A."/>
            <person name="Revuelta J.L."/>
            <person name="Moreno S."/>
            <person name="Armstrong J."/>
            <person name="Forsburg S.L."/>
            <person name="Cerutti L."/>
            <person name="Lowe T."/>
            <person name="McCombie W.R."/>
            <person name="Paulsen I."/>
            <person name="Potashkin J."/>
            <person name="Shpakovski G.V."/>
            <person name="Ussery D."/>
            <person name="Barrell B.G."/>
            <person name="Nurse P."/>
        </authorList>
    </citation>
    <scope>NUCLEOTIDE SEQUENCE [LARGE SCALE GENOMIC DNA]</scope>
    <source>
        <strain>972 / ATCC 24843</strain>
    </source>
</reference>
<reference key="5">
    <citation type="journal article" date="2003" name="Mol. Biol. Cell">
        <title>Schizosaccharomyces pombe Rdh54 (TID1) acts with Rhp54 (RAD54) to repair meiotic double-strand breaks.</title>
        <authorList>
            <person name="Catlett M.G."/>
            <person name="Forsburg S.L."/>
        </authorList>
    </citation>
    <scope>HOMODIMERIZATION</scope>
    <scope>INTERACTION WITH RAD22; RAD54; RDH54; RHP54 AND RTI1</scope>
</reference>
<reference key="6">
    <citation type="journal article" date="2003" name="Proc. Natl. Acad. Sci. U.S.A.">
        <title>Two different Swi5-containing protein complexes are involved in mating-type switching and recombination repair in fission yeast.</title>
        <authorList>
            <person name="Akamatsu Y."/>
            <person name="Dziadkowiec D."/>
            <person name="Ikeguchi M."/>
            <person name="Shinagawa H."/>
            <person name="Iwasaki H."/>
        </authorList>
    </citation>
    <scope>INTERACTION WITH SWI2 AND SWI5</scope>
</reference>
<reference key="7">
    <citation type="journal article" date="2005" name="Mol. Cell. Biol.">
        <title>Fission yeast rad51 and dmc1, two efficient DNA recombinases forming helical nucleoprotein filaments.</title>
        <authorList>
            <person name="Sauvageau S."/>
            <person name="Stasiak A.Z."/>
            <person name="Banville I."/>
            <person name="Ploquin M."/>
            <person name="Stasiak A."/>
            <person name="Masson J.-Y."/>
        </authorList>
    </citation>
    <scope>FUNCTION</scope>
    <scope>HOMOOLIGOMERIZATION</scope>
</reference>
<proteinExistence type="evidence at protein level"/>
<accession>P36601</accession>
<protein>
    <recommendedName>
        <fullName>DNA repair protein rhp51</fullName>
    </recommendedName>
    <alternativeName>
        <fullName>RAD51 homolog</fullName>
    </alternativeName>
</protein>
<keyword id="KW-0067">ATP-binding</keyword>
<keyword id="KW-0227">DNA damage</keyword>
<keyword id="KW-0233">DNA recombination</keyword>
<keyword id="KW-0234">DNA repair</keyword>
<keyword id="KW-0238">DNA-binding</keyword>
<keyword id="KW-0460">Magnesium</keyword>
<keyword id="KW-0547">Nucleotide-binding</keyword>
<keyword id="KW-0539">Nucleus</keyword>
<keyword id="KW-1185">Reference proteome</keyword>
<comment type="function">
    <text evidence="5">Required both for recombination and for the repair of DNA damage caused by X-rays. Binds to single and double-stranded DNA, in the presence of magnesium, and exhibits DNA-dependent ATPase activity. Promotes DNA strand annealing and strand exchange via DNA recombinase activity and forms helical nucleoprotein filaments.</text>
</comment>
<comment type="subunit">
    <text evidence="3 4">Interacts with rad22, rad54, rdh54, rhp54, rti1, swi2 and swi5. Forms homooiligomers.</text>
</comment>
<comment type="interaction">
    <interactant intactId="EBI-926960">
        <id>P36601</id>
    </interactant>
    <interactant intactId="EBI-966242">
        <id>P36592</id>
        <label>rad22</label>
    </interactant>
    <organismsDiffer>false</organismsDiffer>
    <experiments>5</experiments>
</comment>
<comment type="interaction">
    <interactant intactId="EBI-926960">
        <id>P36601</id>
    </interactant>
    <interactant intactId="EBI-926960">
        <id>P36601</id>
        <label>rhp51</label>
    </interactant>
    <organismsDiffer>false</organismsDiffer>
    <experiments>7</experiments>
</comment>
<comment type="interaction">
    <interactant intactId="EBI-926960">
        <id>P36601</id>
    </interactant>
    <interactant intactId="EBI-1167415">
        <id>P41410</id>
        <label>rhp54</label>
    </interactant>
    <organismsDiffer>false</organismsDiffer>
    <experiments>3</experiments>
</comment>
<comment type="interaction">
    <interactant intactId="EBI-926960">
        <id>P36601</id>
    </interactant>
    <interactant intactId="EBI-1167500">
        <id>O42905</id>
        <label>rti1</label>
    </interactant>
    <organismsDiffer>false</organismsDiffer>
    <experiments>3</experiments>
</comment>
<comment type="interaction">
    <interactant intactId="EBI-926960">
        <id>P36601</id>
    </interactant>
    <interactant intactId="EBI-927233">
        <id>Q9USV1</id>
        <label>sfr1</label>
    </interactant>
    <organismsDiffer>false</organismsDiffer>
    <experiments>6</experiments>
</comment>
<comment type="interaction">
    <interactant intactId="EBI-926960">
        <id>P36601</id>
    </interactant>
    <interactant intactId="EBI-926914">
        <id>Q10668</id>
        <label>swi2</label>
    </interactant>
    <organismsDiffer>false</organismsDiffer>
    <experiments>3</experiments>
</comment>
<comment type="subcellular location">
    <subcellularLocation>
        <location evidence="6">Nucleus</location>
    </subcellularLocation>
</comment>
<comment type="similarity">
    <text evidence="6">Belongs to the RecA family. RAD51 subfamily.</text>
</comment>
<comment type="sequence caution" evidence="6">
    <conflict type="erroneous initiation">
        <sequence resource="EMBL-CDS" id="CAA80878"/>
    </conflict>
</comment>
<evidence type="ECO:0000255" key="1"/>
<evidence type="ECO:0000256" key="2">
    <source>
        <dbReference type="SAM" id="MobiDB-lite"/>
    </source>
</evidence>
<evidence type="ECO:0000269" key="3">
    <source>
    </source>
</evidence>
<evidence type="ECO:0000269" key="4">
    <source>
    </source>
</evidence>
<evidence type="ECO:0000269" key="5">
    <source>
    </source>
</evidence>
<evidence type="ECO:0000305" key="6"/>